<name>TRXB_MYCGE</name>
<evidence type="ECO:0000250" key="1"/>
<evidence type="ECO:0000250" key="2">
    <source>
        <dbReference type="UniProtKB" id="P0A9P4"/>
    </source>
</evidence>
<evidence type="ECO:0000305" key="3"/>
<dbReference type="EC" id="1.8.1.9"/>
<dbReference type="EMBL" id="L43967">
    <property type="protein sequence ID" value="AAC71320.1"/>
    <property type="molecule type" value="Genomic_DNA"/>
</dbReference>
<dbReference type="EMBL" id="U02197">
    <property type="protein sequence ID" value="AAD12483.1"/>
    <property type="molecule type" value="Genomic_DNA"/>
</dbReference>
<dbReference type="PIR" id="C64211">
    <property type="entry name" value="C64211"/>
</dbReference>
<dbReference type="RefSeq" id="WP_009885660.1">
    <property type="nucleotide sequence ID" value="NC_000908.2"/>
</dbReference>
<dbReference type="SMR" id="P47348"/>
<dbReference type="FunCoup" id="P47348">
    <property type="interactions" value="122"/>
</dbReference>
<dbReference type="STRING" id="243273.MG_102"/>
<dbReference type="GeneID" id="88282225"/>
<dbReference type="KEGG" id="mge:MG_102"/>
<dbReference type="eggNOG" id="COG0492">
    <property type="taxonomic scope" value="Bacteria"/>
</dbReference>
<dbReference type="HOGENOM" id="CLU_031864_5_3_14"/>
<dbReference type="InParanoid" id="P47348"/>
<dbReference type="OrthoDB" id="9806179at2"/>
<dbReference type="BioCyc" id="MGEN243273:G1GJ2-114-MONOMER"/>
<dbReference type="Proteomes" id="UP000000807">
    <property type="component" value="Chromosome"/>
</dbReference>
<dbReference type="GO" id="GO:0005737">
    <property type="term" value="C:cytoplasm"/>
    <property type="evidence" value="ECO:0007669"/>
    <property type="project" value="UniProtKB-SubCell"/>
</dbReference>
<dbReference type="GO" id="GO:0004791">
    <property type="term" value="F:thioredoxin-disulfide reductase (NADPH) activity"/>
    <property type="evidence" value="ECO:0000318"/>
    <property type="project" value="GO_Central"/>
</dbReference>
<dbReference type="GO" id="GO:0045454">
    <property type="term" value="P:cell redox homeostasis"/>
    <property type="evidence" value="ECO:0000318"/>
    <property type="project" value="GO_Central"/>
</dbReference>
<dbReference type="GO" id="GO:0019430">
    <property type="term" value="P:removal of superoxide radicals"/>
    <property type="evidence" value="ECO:0007669"/>
    <property type="project" value="InterPro"/>
</dbReference>
<dbReference type="Gene3D" id="3.50.50.60">
    <property type="entry name" value="FAD/NAD(P)-binding domain"/>
    <property type="match status" value="2"/>
</dbReference>
<dbReference type="InterPro" id="IPR036188">
    <property type="entry name" value="FAD/NAD-bd_sf"/>
</dbReference>
<dbReference type="InterPro" id="IPR023753">
    <property type="entry name" value="FAD/NAD-binding_dom"/>
</dbReference>
<dbReference type="InterPro" id="IPR050097">
    <property type="entry name" value="Ferredoxin-NADP_redctase_2"/>
</dbReference>
<dbReference type="InterPro" id="IPR008255">
    <property type="entry name" value="Pyr_nucl-diS_OxRdtase_2_AS"/>
</dbReference>
<dbReference type="InterPro" id="IPR005982">
    <property type="entry name" value="Thioredox_Rdtase"/>
</dbReference>
<dbReference type="NCBIfam" id="TIGR01292">
    <property type="entry name" value="TRX_reduct"/>
    <property type="match status" value="1"/>
</dbReference>
<dbReference type="PANTHER" id="PTHR48105">
    <property type="entry name" value="THIOREDOXIN REDUCTASE 1-RELATED-RELATED"/>
    <property type="match status" value="1"/>
</dbReference>
<dbReference type="Pfam" id="PF07992">
    <property type="entry name" value="Pyr_redox_2"/>
    <property type="match status" value="1"/>
</dbReference>
<dbReference type="PRINTS" id="PR00368">
    <property type="entry name" value="FADPNR"/>
</dbReference>
<dbReference type="PRINTS" id="PR00469">
    <property type="entry name" value="PNDRDTASEII"/>
</dbReference>
<dbReference type="SUPFAM" id="SSF51905">
    <property type="entry name" value="FAD/NAD(P)-binding domain"/>
    <property type="match status" value="1"/>
</dbReference>
<dbReference type="PROSITE" id="PS00573">
    <property type="entry name" value="PYRIDINE_REDOX_2"/>
    <property type="match status" value="1"/>
</dbReference>
<feature type="chain" id="PRO_0000166737" description="Thioredoxin reductase">
    <location>
        <begin position="1"/>
        <end position="315"/>
    </location>
</feature>
<feature type="binding site" evidence="2">
    <location>
        <begin position="45"/>
        <end position="52"/>
    </location>
    <ligand>
        <name>FAD</name>
        <dbReference type="ChEBI" id="CHEBI:57692"/>
    </ligand>
</feature>
<feature type="binding site" evidence="2">
    <location>
        <begin position="288"/>
        <end position="297"/>
    </location>
    <ligand>
        <name>FAD</name>
        <dbReference type="ChEBI" id="CHEBI:57692"/>
    </ligand>
</feature>
<feature type="disulfide bond" description="Redox-active" evidence="2">
    <location>
        <begin position="145"/>
        <end position="148"/>
    </location>
</feature>
<feature type="sequence conflict" description="In Ref. 2." evidence="3" ref="2">
    <original>VFSKTVIYAT</original>
    <variation>FLAKLLSMQQ</variation>
    <location>
        <begin position="113"/>
        <end position="122"/>
    </location>
</feature>
<accession>P47348</accession>
<accession>Q49316</accession>
<keyword id="KW-0963">Cytoplasm</keyword>
<keyword id="KW-1015">Disulfide bond</keyword>
<keyword id="KW-0274">FAD</keyword>
<keyword id="KW-0285">Flavoprotein</keyword>
<keyword id="KW-0521">NADP</keyword>
<keyword id="KW-0560">Oxidoreductase</keyword>
<keyword id="KW-0676">Redox-active center</keyword>
<keyword id="KW-1185">Reference proteome</keyword>
<sequence>MLKVNADFLTKDQVIYDLVIVGAGPAGIASAIYGKRANLNLAIIEGNTPGGKIVKTNIVENYPGFKTITGPELGLEMYNHLLAFEPVVFYNNLIKIDHLNDTFILYLDNKTTVFSKTVIYATGMEERKLGIEKEDYFYGKGISYCAICDAALYKGKTVGVVGGGNSAIQEAIYLSSIAKTVHLIHRREVFRSDALLVEKLKKISNVVFHLNATVKQLIGQEKLQTVKLASTVDKSESEIAIDCLFPYIGFESNNKPVLDLKLNLDQNGFILGDENMQTNIKGFYVAGDCRSKSFRQIATAISDGVTAVLKVRDDI</sequence>
<protein>
    <recommendedName>
        <fullName>Thioredoxin reductase</fullName>
        <shortName>TRXR</shortName>
        <ecNumber>1.8.1.9</ecNumber>
    </recommendedName>
</protein>
<gene>
    <name type="primary">trxB</name>
    <name type="ordered locus">MG102</name>
</gene>
<reference key="1">
    <citation type="journal article" date="1995" name="Science">
        <title>The minimal gene complement of Mycoplasma genitalium.</title>
        <authorList>
            <person name="Fraser C.M."/>
            <person name="Gocayne J.D."/>
            <person name="White O."/>
            <person name="Adams M.D."/>
            <person name="Clayton R.A."/>
            <person name="Fleischmann R.D."/>
            <person name="Bult C.J."/>
            <person name="Kerlavage A.R."/>
            <person name="Sutton G.G."/>
            <person name="Kelley J.M."/>
            <person name="Fritchman J.L."/>
            <person name="Weidman J.F."/>
            <person name="Small K.V."/>
            <person name="Sandusky M."/>
            <person name="Fuhrmann J.L."/>
            <person name="Nguyen D.T."/>
            <person name="Utterback T.R."/>
            <person name="Saudek D.M."/>
            <person name="Phillips C.A."/>
            <person name="Merrick J.M."/>
            <person name="Tomb J.-F."/>
            <person name="Dougherty B.A."/>
            <person name="Bott K.F."/>
            <person name="Hu P.-C."/>
            <person name="Lucier T.S."/>
            <person name="Peterson S.N."/>
            <person name="Smith H.O."/>
            <person name="Hutchison C.A. III"/>
            <person name="Venter J.C."/>
        </authorList>
    </citation>
    <scope>NUCLEOTIDE SEQUENCE [LARGE SCALE GENOMIC DNA]</scope>
    <source>
        <strain>ATCC 33530 / DSM 19775 / NCTC 10195 / G37</strain>
    </source>
</reference>
<reference key="2">
    <citation type="journal article" date="1993" name="J. Bacteriol.">
        <title>A survey of the Mycoplasma genitalium genome by using random sequencing.</title>
        <authorList>
            <person name="Peterson S.N."/>
            <person name="Hu P.-C."/>
            <person name="Bott K.F."/>
            <person name="Hutchison C.A. III"/>
        </authorList>
    </citation>
    <scope>NUCLEOTIDE SEQUENCE [GENOMIC DNA] OF 16-122</scope>
    <source>
        <strain>ATCC 33530 / DSM 19775 / NCTC 10195 / G37</strain>
    </source>
</reference>
<comment type="catalytic activity">
    <reaction>
        <text>[thioredoxin]-dithiol + NADP(+) = [thioredoxin]-disulfide + NADPH + H(+)</text>
        <dbReference type="Rhea" id="RHEA:20345"/>
        <dbReference type="Rhea" id="RHEA-COMP:10698"/>
        <dbReference type="Rhea" id="RHEA-COMP:10700"/>
        <dbReference type="ChEBI" id="CHEBI:15378"/>
        <dbReference type="ChEBI" id="CHEBI:29950"/>
        <dbReference type="ChEBI" id="CHEBI:50058"/>
        <dbReference type="ChEBI" id="CHEBI:57783"/>
        <dbReference type="ChEBI" id="CHEBI:58349"/>
        <dbReference type="EC" id="1.8.1.9"/>
    </reaction>
</comment>
<comment type="cofactor">
    <cofactor evidence="2">
        <name>FAD</name>
        <dbReference type="ChEBI" id="CHEBI:57692"/>
    </cofactor>
    <text evidence="2">Binds 1 FAD per subunit.</text>
</comment>
<comment type="subunit">
    <text evidence="2">Homodimer.</text>
</comment>
<comment type="subcellular location">
    <subcellularLocation>
        <location evidence="1">Cytoplasm</location>
    </subcellularLocation>
</comment>
<comment type="miscellaneous">
    <text>The active site is a redox-active disulfide bond.</text>
</comment>
<comment type="similarity">
    <text evidence="3">Belongs to the class-II pyridine nucleotide-disulfide oxidoreductase family.</text>
</comment>
<proteinExistence type="inferred from homology"/>
<organism>
    <name type="scientific">Mycoplasma genitalium (strain ATCC 33530 / DSM 19775 / NCTC 10195 / G37)</name>
    <name type="common">Mycoplasmoides genitalium</name>
    <dbReference type="NCBI Taxonomy" id="243273"/>
    <lineage>
        <taxon>Bacteria</taxon>
        <taxon>Bacillati</taxon>
        <taxon>Mycoplasmatota</taxon>
        <taxon>Mycoplasmoidales</taxon>
        <taxon>Mycoplasmoidaceae</taxon>
        <taxon>Mycoplasmoides</taxon>
    </lineage>
</organism>